<keyword id="KW-1185">Reference proteome</keyword>
<accession>Q6R7K6</accession>
<reference key="1">
    <citation type="journal article" date="2005" name="J. Gen. Virol.">
        <title>A novel class of herpesvirus with bivalve hosts.</title>
        <authorList>
            <person name="Davison A.J."/>
            <person name="Trus B.L."/>
            <person name="Cheng N."/>
            <person name="Steven A.C."/>
            <person name="Watson M.S."/>
            <person name="Cunningham C."/>
            <person name="Le Deuff R.M."/>
            <person name="Renault T."/>
        </authorList>
    </citation>
    <scope>NUCLEOTIDE SEQUENCE [LARGE SCALE GENOMIC DNA]</scope>
</reference>
<organism>
    <name type="scientific">Ostreid herpesvirus 1 (isolate France)</name>
    <name type="common">OsHV-1</name>
    <name type="synonym">Pacific oyster herpesvirus</name>
    <dbReference type="NCBI Taxonomy" id="654903"/>
    <lineage>
        <taxon>Viruses</taxon>
        <taxon>Duplodnaviria</taxon>
        <taxon>Heunggongvirae</taxon>
        <taxon>Peploviricota</taxon>
        <taxon>Herviviricetes</taxon>
        <taxon>Herpesvirales</taxon>
        <taxon>Malacoherpesviridae</taxon>
        <taxon>Ostreavirus</taxon>
        <taxon>Ostreavirus ostreidmalaco1</taxon>
        <taxon>Ostreid herpesvirus 1</taxon>
    </lineage>
</organism>
<sequence>MSYEHAASTSIIFLILSPGGRKCVCFISRVVCSKSMFSTLLSKTLLRFFKSYICLLRSVISPEYFSFNSFNSSRAITISIVEFFCCLLGGIVSCYEVKAELCGIFILLNNDEENQ</sequence>
<protein>
    <recommendedName>
        <fullName>Uncharacterized protein ORF17</fullName>
    </recommendedName>
</protein>
<name>Y017_OSHVF</name>
<proteinExistence type="predicted"/>
<feature type="chain" id="PRO_0000385049" description="Uncharacterized protein ORF17">
    <location>
        <begin position="1"/>
        <end position="115"/>
    </location>
</feature>
<dbReference type="EMBL" id="AY509253">
    <property type="protein sequence ID" value="AAS00909.1"/>
    <property type="molecule type" value="Genomic_DNA"/>
</dbReference>
<dbReference type="RefSeq" id="YP_024562.1">
    <property type="nucleotide sequence ID" value="NC_005881.2"/>
</dbReference>
<dbReference type="KEGG" id="vg:2948243"/>
<dbReference type="Proteomes" id="UP000007021">
    <property type="component" value="Segment"/>
</dbReference>
<gene>
    <name type="ORF">ORF17</name>
</gene>
<organismHost>
    <name type="scientific">Magallana gigas</name>
    <name type="common">Pacific oyster</name>
    <name type="synonym">Crassostrea gigas</name>
    <dbReference type="NCBI Taxonomy" id="29159"/>
</organismHost>
<organismHost>
    <name type="scientific">Pecten maximus</name>
    <name type="common">King scallop</name>
    <name type="synonym">Pilgrim's clam</name>
    <dbReference type="NCBI Taxonomy" id="6579"/>
</organismHost>